<evidence type="ECO:0000255" key="1">
    <source>
        <dbReference type="HAMAP-Rule" id="MF_00736"/>
    </source>
</evidence>
<evidence type="ECO:0000305" key="2"/>
<organism>
    <name type="scientific">Photorhabdus laumondii subsp. laumondii (strain DSM 15139 / CIP 105565 / TT01)</name>
    <name type="common">Photorhabdus luminescens subsp. laumondii</name>
    <dbReference type="NCBI Taxonomy" id="243265"/>
    <lineage>
        <taxon>Bacteria</taxon>
        <taxon>Pseudomonadati</taxon>
        <taxon>Pseudomonadota</taxon>
        <taxon>Gammaproteobacteria</taxon>
        <taxon>Enterobacterales</taxon>
        <taxon>Morganellaceae</taxon>
        <taxon>Photorhabdus</taxon>
    </lineage>
</organism>
<comment type="function">
    <text evidence="1">Forms part of the ribosomal stalk which helps the ribosome interact with GTP-bound translation factors.</text>
</comment>
<comment type="subunit">
    <text evidence="1">Part of the ribosomal stalk of the 50S ribosomal subunit. Interacts with L10 and the large rRNA to form the base of the stalk. L10 forms an elongated spine to which L12 dimers bind in a sequential fashion forming a multimeric L10(L12)X complex.</text>
</comment>
<comment type="PTM">
    <text evidence="1">One or more lysine residues are methylated.</text>
</comment>
<comment type="similarity">
    <text evidence="1">Belongs to the universal ribosomal protein uL11 family.</text>
</comment>
<dbReference type="EMBL" id="BX571860">
    <property type="protein sequence ID" value="CAE12730.1"/>
    <property type="molecule type" value="Genomic_DNA"/>
</dbReference>
<dbReference type="RefSeq" id="WP_011144821.1">
    <property type="nucleotide sequence ID" value="NC_005126.1"/>
</dbReference>
<dbReference type="SMR" id="P60103"/>
<dbReference type="STRING" id="243265.plu0435"/>
<dbReference type="GeneID" id="48846721"/>
<dbReference type="KEGG" id="plu:plu0435"/>
<dbReference type="eggNOG" id="COG0080">
    <property type="taxonomic scope" value="Bacteria"/>
</dbReference>
<dbReference type="HOGENOM" id="CLU_074237_2_0_6"/>
<dbReference type="OrthoDB" id="9802408at2"/>
<dbReference type="Proteomes" id="UP000002514">
    <property type="component" value="Chromosome"/>
</dbReference>
<dbReference type="GO" id="GO:0022625">
    <property type="term" value="C:cytosolic large ribosomal subunit"/>
    <property type="evidence" value="ECO:0007669"/>
    <property type="project" value="TreeGrafter"/>
</dbReference>
<dbReference type="GO" id="GO:0070180">
    <property type="term" value="F:large ribosomal subunit rRNA binding"/>
    <property type="evidence" value="ECO:0007669"/>
    <property type="project" value="UniProtKB-UniRule"/>
</dbReference>
<dbReference type="GO" id="GO:0003735">
    <property type="term" value="F:structural constituent of ribosome"/>
    <property type="evidence" value="ECO:0007669"/>
    <property type="project" value="InterPro"/>
</dbReference>
<dbReference type="GO" id="GO:0006412">
    <property type="term" value="P:translation"/>
    <property type="evidence" value="ECO:0007669"/>
    <property type="project" value="UniProtKB-UniRule"/>
</dbReference>
<dbReference type="CDD" id="cd00349">
    <property type="entry name" value="Ribosomal_L11"/>
    <property type="match status" value="1"/>
</dbReference>
<dbReference type="FunFam" id="1.10.10.250:FF:000001">
    <property type="entry name" value="50S ribosomal protein L11"/>
    <property type="match status" value="1"/>
</dbReference>
<dbReference type="FunFam" id="3.30.1550.10:FF:000001">
    <property type="entry name" value="50S ribosomal protein L11"/>
    <property type="match status" value="1"/>
</dbReference>
<dbReference type="Gene3D" id="1.10.10.250">
    <property type="entry name" value="Ribosomal protein L11, C-terminal domain"/>
    <property type="match status" value="1"/>
</dbReference>
<dbReference type="Gene3D" id="3.30.1550.10">
    <property type="entry name" value="Ribosomal protein L11/L12, N-terminal domain"/>
    <property type="match status" value="1"/>
</dbReference>
<dbReference type="HAMAP" id="MF_00736">
    <property type="entry name" value="Ribosomal_uL11"/>
    <property type="match status" value="1"/>
</dbReference>
<dbReference type="InterPro" id="IPR000911">
    <property type="entry name" value="Ribosomal_uL11"/>
</dbReference>
<dbReference type="InterPro" id="IPR006519">
    <property type="entry name" value="Ribosomal_uL11_bac-typ"/>
</dbReference>
<dbReference type="InterPro" id="IPR020783">
    <property type="entry name" value="Ribosomal_uL11_C"/>
</dbReference>
<dbReference type="InterPro" id="IPR036769">
    <property type="entry name" value="Ribosomal_uL11_C_sf"/>
</dbReference>
<dbReference type="InterPro" id="IPR020785">
    <property type="entry name" value="Ribosomal_uL11_CS"/>
</dbReference>
<dbReference type="InterPro" id="IPR020784">
    <property type="entry name" value="Ribosomal_uL11_N"/>
</dbReference>
<dbReference type="InterPro" id="IPR036796">
    <property type="entry name" value="Ribosomal_uL11_N_sf"/>
</dbReference>
<dbReference type="NCBIfam" id="TIGR01632">
    <property type="entry name" value="L11_bact"/>
    <property type="match status" value="1"/>
</dbReference>
<dbReference type="PANTHER" id="PTHR11661">
    <property type="entry name" value="60S RIBOSOMAL PROTEIN L12"/>
    <property type="match status" value="1"/>
</dbReference>
<dbReference type="PANTHER" id="PTHR11661:SF1">
    <property type="entry name" value="LARGE RIBOSOMAL SUBUNIT PROTEIN UL11M"/>
    <property type="match status" value="1"/>
</dbReference>
<dbReference type="Pfam" id="PF00298">
    <property type="entry name" value="Ribosomal_L11"/>
    <property type="match status" value="1"/>
</dbReference>
<dbReference type="Pfam" id="PF03946">
    <property type="entry name" value="Ribosomal_L11_N"/>
    <property type="match status" value="1"/>
</dbReference>
<dbReference type="SMART" id="SM00649">
    <property type="entry name" value="RL11"/>
    <property type="match status" value="1"/>
</dbReference>
<dbReference type="SUPFAM" id="SSF54747">
    <property type="entry name" value="Ribosomal L11/L12e N-terminal domain"/>
    <property type="match status" value="1"/>
</dbReference>
<dbReference type="SUPFAM" id="SSF46906">
    <property type="entry name" value="Ribosomal protein L11, C-terminal domain"/>
    <property type="match status" value="1"/>
</dbReference>
<dbReference type="PROSITE" id="PS00359">
    <property type="entry name" value="RIBOSOMAL_L11"/>
    <property type="match status" value="1"/>
</dbReference>
<protein>
    <recommendedName>
        <fullName evidence="1">Large ribosomal subunit protein uL11</fullName>
    </recommendedName>
    <alternativeName>
        <fullName evidence="2">50S ribosomal protein L11</fullName>
    </alternativeName>
</protein>
<reference key="1">
    <citation type="journal article" date="2003" name="Nat. Biotechnol.">
        <title>The genome sequence of the entomopathogenic bacterium Photorhabdus luminescens.</title>
        <authorList>
            <person name="Duchaud E."/>
            <person name="Rusniok C."/>
            <person name="Frangeul L."/>
            <person name="Buchrieser C."/>
            <person name="Givaudan A."/>
            <person name="Taourit S."/>
            <person name="Bocs S."/>
            <person name="Boursaux-Eude C."/>
            <person name="Chandler M."/>
            <person name="Charles J.-F."/>
            <person name="Dassa E."/>
            <person name="Derose R."/>
            <person name="Derzelle S."/>
            <person name="Freyssinet G."/>
            <person name="Gaudriault S."/>
            <person name="Medigue C."/>
            <person name="Lanois A."/>
            <person name="Powell K."/>
            <person name="Siguier P."/>
            <person name="Vincent R."/>
            <person name="Wingate V."/>
            <person name="Zouine M."/>
            <person name="Glaser P."/>
            <person name="Boemare N."/>
            <person name="Danchin A."/>
            <person name="Kunst F."/>
        </authorList>
    </citation>
    <scope>NUCLEOTIDE SEQUENCE [LARGE SCALE GENOMIC DNA]</scope>
    <source>
        <strain>DSM 15139 / CIP 105565 / TT01</strain>
    </source>
</reference>
<keyword id="KW-0488">Methylation</keyword>
<keyword id="KW-1185">Reference proteome</keyword>
<keyword id="KW-0687">Ribonucleoprotein</keyword>
<keyword id="KW-0689">Ribosomal protein</keyword>
<keyword id="KW-0694">RNA-binding</keyword>
<keyword id="KW-0699">rRNA-binding</keyword>
<feature type="chain" id="PRO_0000104334" description="Large ribosomal subunit protein uL11">
    <location>
        <begin position="1"/>
        <end position="142"/>
    </location>
</feature>
<name>RL11_PHOLL</name>
<proteinExistence type="inferred from homology"/>
<sequence>MAKKVQAYVKLQVAAGMANPSPPVGPALGQQGVNIMEFCKAFNAKTDSIEKGLPIPVVITVYSDRSFTFVTKTPPAAVLLKKAAGIKSGSGKPNKDKVGKVTSAQIREIAETKAADMTGASVDAMMRSIEGTARSMGLVVEG</sequence>
<accession>P60103</accession>
<accession>Q7N9A8</accession>
<gene>
    <name evidence="1" type="primary">rplK</name>
    <name type="ordered locus">plu0435</name>
</gene>